<proteinExistence type="inferred from homology"/>
<accession>Q0T6Y5</accession>
<reference key="1">
    <citation type="journal article" date="2006" name="BMC Genomics">
        <title>Complete genome sequence of Shigella flexneri 5b and comparison with Shigella flexneri 2a.</title>
        <authorList>
            <person name="Nie H."/>
            <person name="Yang F."/>
            <person name="Zhang X."/>
            <person name="Yang J."/>
            <person name="Chen L."/>
            <person name="Wang J."/>
            <person name="Xiong Z."/>
            <person name="Peng J."/>
            <person name="Sun L."/>
            <person name="Dong J."/>
            <person name="Xue Y."/>
            <person name="Xu X."/>
            <person name="Chen S."/>
            <person name="Yao Z."/>
            <person name="Shen Y."/>
            <person name="Jin Q."/>
        </authorList>
    </citation>
    <scope>NUCLEOTIDE SEQUENCE [LARGE SCALE GENOMIC DNA]</scope>
    <source>
        <strain>8401</strain>
    </source>
</reference>
<keyword id="KW-0312">Gluconeogenesis</keyword>
<keyword id="KW-0324">Glycolysis</keyword>
<keyword id="KW-0413">Isomerase</keyword>
<evidence type="ECO:0000255" key="1">
    <source>
        <dbReference type="HAMAP-Rule" id="MF_01039"/>
    </source>
</evidence>
<dbReference type="EC" id="5.4.2.11" evidence="1"/>
<dbReference type="EMBL" id="CP000266">
    <property type="protein sequence ID" value="ABF02841.1"/>
    <property type="molecule type" value="Genomic_DNA"/>
</dbReference>
<dbReference type="RefSeq" id="WP_001295305.1">
    <property type="nucleotide sequence ID" value="NC_008258.1"/>
</dbReference>
<dbReference type="SMR" id="Q0T6Y5"/>
<dbReference type="GeneID" id="93776726"/>
<dbReference type="KEGG" id="sfv:SFV_0585"/>
<dbReference type="HOGENOM" id="CLU_033323_1_1_6"/>
<dbReference type="UniPathway" id="UPA00109">
    <property type="reaction ID" value="UER00186"/>
</dbReference>
<dbReference type="Proteomes" id="UP000000659">
    <property type="component" value="Chromosome"/>
</dbReference>
<dbReference type="GO" id="GO:0004619">
    <property type="term" value="F:phosphoglycerate mutase activity"/>
    <property type="evidence" value="ECO:0007669"/>
    <property type="project" value="UniProtKB-EC"/>
</dbReference>
<dbReference type="GO" id="GO:0006094">
    <property type="term" value="P:gluconeogenesis"/>
    <property type="evidence" value="ECO:0007669"/>
    <property type="project" value="UniProtKB-UniRule"/>
</dbReference>
<dbReference type="GO" id="GO:0006096">
    <property type="term" value="P:glycolytic process"/>
    <property type="evidence" value="ECO:0007669"/>
    <property type="project" value="UniProtKB-UniRule"/>
</dbReference>
<dbReference type="CDD" id="cd07067">
    <property type="entry name" value="HP_PGM_like"/>
    <property type="match status" value="1"/>
</dbReference>
<dbReference type="FunFam" id="3.40.50.1240:FF:000003">
    <property type="entry name" value="2,3-bisphosphoglycerate-dependent phosphoglycerate mutase"/>
    <property type="match status" value="1"/>
</dbReference>
<dbReference type="Gene3D" id="3.40.50.1240">
    <property type="entry name" value="Phosphoglycerate mutase-like"/>
    <property type="match status" value="1"/>
</dbReference>
<dbReference type="HAMAP" id="MF_01039">
    <property type="entry name" value="PGAM_GpmA"/>
    <property type="match status" value="1"/>
</dbReference>
<dbReference type="InterPro" id="IPR013078">
    <property type="entry name" value="His_Pase_superF_clade-1"/>
</dbReference>
<dbReference type="InterPro" id="IPR029033">
    <property type="entry name" value="His_PPase_superfam"/>
</dbReference>
<dbReference type="InterPro" id="IPR001345">
    <property type="entry name" value="PG/BPGM_mutase_AS"/>
</dbReference>
<dbReference type="InterPro" id="IPR005952">
    <property type="entry name" value="Phosphogly_mut1"/>
</dbReference>
<dbReference type="NCBIfam" id="TIGR01258">
    <property type="entry name" value="pgm_1"/>
    <property type="match status" value="1"/>
</dbReference>
<dbReference type="NCBIfam" id="NF010713">
    <property type="entry name" value="PRK14115.1"/>
    <property type="match status" value="1"/>
</dbReference>
<dbReference type="PANTHER" id="PTHR11931">
    <property type="entry name" value="PHOSPHOGLYCERATE MUTASE"/>
    <property type="match status" value="1"/>
</dbReference>
<dbReference type="Pfam" id="PF00300">
    <property type="entry name" value="His_Phos_1"/>
    <property type="match status" value="1"/>
</dbReference>
<dbReference type="PIRSF" id="PIRSF000709">
    <property type="entry name" value="6PFK_2-Ptase"/>
    <property type="match status" value="1"/>
</dbReference>
<dbReference type="SMART" id="SM00855">
    <property type="entry name" value="PGAM"/>
    <property type="match status" value="1"/>
</dbReference>
<dbReference type="SUPFAM" id="SSF53254">
    <property type="entry name" value="Phosphoglycerate mutase-like"/>
    <property type="match status" value="1"/>
</dbReference>
<dbReference type="PROSITE" id="PS00175">
    <property type="entry name" value="PG_MUTASE"/>
    <property type="match status" value="1"/>
</dbReference>
<sequence length="250" mass="28556">MAVTKLVLVRHGESQWNKENRFTGWYDVDLSEKGVSEAKAAGKLLKEEGYSFDFAYTSVLKRAIHTLWNVLDELDQAWLPVEKSWKLNERHYGALQGLNKAETAEKYGDEQVKQWRRGFAVTPPELTKDDERYPGHDPRYAKLSEKELPLTESLALTIDRVIPYWNETILPRMKSGERVIIAAHGNSLRALVKYLDNMSEEEILELNIPTGVPLVYEFDENFKPLKRYYLGNADEIAAKAAAVANQGKAK</sequence>
<protein>
    <recommendedName>
        <fullName evidence="1">2,3-bisphosphoglycerate-dependent phosphoglycerate mutase</fullName>
        <shortName evidence="1">BPG-dependent PGAM</shortName>
        <shortName evidence="1">PGAM</shortName>
        <shortName evidence="1">Phosphoglyceromutase</shortName>
        <shortName evidence="1">dPGM</shortName>
        <ecNumber evidence="1">5.4.2.11</ecNumber>
    </recommendedName>
</protein>
<gene>
    <name evidence="1" type="primary">gpmA</name>
    <name type="ordered locus">SFV_0585</name>
</gene>
<name>GPMA_SHIF8</name>
<organism>
    <name type="scientific">Shigella flexneri serotype 5b (strain 8401)</name>
    <dbReference type="NCBI Taxonomy" id="373384"/>
    <lineage>
        <taxon>Bacteria</taxon>
        <taxon>Pseudomonadati</taxon>
        <taxon>Pseudomonadota</taxon>
        <taxon>Gammaproteobacteria</taxon>
        <taxon>Enterobacterales</taxon>
        <taxon>Enterobacteriaceae</taxon>
        <taxon>Shigella</taxon>
    </lineage>
</organism>
<comment type="function">
    <text evidence="1">Catalyzes the interconversion of 2-phosphoglycerate and 3-phosphoglycerate.</text>
</comment>
<comment type="catalytic activity">
    <reaction evidence="1">
        <text>(2R)-2-phosphoglycerate = (2R)-3-phosphoglycerate</text>
        <dbReference type="Rhea" id="RHEA:15901"/>
        <dbReference type="ChEBI" id="CHEBI:58272"/>
        <dbReference type="ChEBI" id="CHEBI:58289"/>
        <dbReference type="EC" id="5.4.2.11"/>
    </reaction>
</comment>
<comment type="pathway">
    <text evidence="1">Carbohydrate degradation; glycolysis; pyruvate from D-glyceraldehyde 3-phosphate: step 3/5.</text>
</comment>
<comment type="subunit">
    <text evidence="1">Homodimer.</text>
</comment>
<comment type="similarity">
    <text evidence="1">Belongs to the phosphoglycerate mutase family. BPG-dependent PGAM subfamily.</text>
</comment>
<feature type="chain" id="PRO_1000064095" description="2,3-bisphosphoglycerate-dependent phosphoglycerate mutase">
    <location>
        <begin position="1"/>
        <end position="250"/>
    </location>
</feature>
<feature type="active site" description="Tele-phosphohistidine intermediate" evidence="1">
    <location>
        <position position="11"/>
    </location>
</feature>
<feature type="active site" description="Proton donor/acceptor" evidence="1">
    <location>
        <position position="89"/>
    </location>
</feature>
<feature type="binding site" evidence="1">
    <location>
        <begin position="10"/>
        <end position="17"/>
    </location>
    <ligand>
        <name>substrate</name>
    </ligand>
</feature>
<feature type="binding site" evidence="1">
    <location>
        <begin position="23"/>
        <end position="24"/>
    </location>
    <ligand>
        <name>substrate</name>
    </ligand>
</feature>
<feature type="binding site" evidence="1">
    <location>
        <position position="62"/>
    </location>
    <ligand>
        <name>substrate</name>
    </ligand>
</feature>
<feature type="binding site" evidence="1">
    <location>
        <begin position="89"/>
        <end position="92"/>
    </location>
    <ligand>
        <name>substrate</name>
    </ligand>
</feature>
<feature type="binding site" evidence="1">
    <location>
        <position position="100"/>
    </location>
    <ligand>
        <name>substrate</name>
    </ligand>
</feature>
<feature type="binding site" evidence="1">
    <location>
        <begin position="116"/>
        <end position="117"/>
    </location>
    <ligand>
        <name>substrate</name>
    </ligand>
</feature>
<feature type="binding site" evidence="1">
    <location>
        <begin position="185"/>
        <end position="186"/>
    </location>
    <ligand>
        <name>substrate</name>
    </ligand>
</feature>
<feature type="site" description="Transition state stabilizer" evidence="1">
    <location>
        <position position="184"/>
    </location>
</feature>